<accession>P81297</accession>
<accession>Q70UR0</accession>
<keyword id="KW-0002">3D-structure</keyword>
<keyword id="KW-0903">Direct protein sequencing</keyword>
<keyword id="KW-0378">Hydrolase</keyword>
<keyword id="KW-0645">Protease</keyword>
<keyword id="KW-0964">Secreted</keyword>
<keyword id="KW-0732">Signal</keyword>
<keyword id="KW-0788">Thiol protease</keyword>
<keyword id="KW-0843">Virulence</keyword>
<keyword id="KW-0865">Zymogen</keyword>
<comment type="function">
    <text evidence="3 5 6">Cysteine protease that plays an important role in the inhibition of host innate immune response. Cleaves host elastins found in connective tissues, pulmonary surfactant protein A in the lungs, and the chemokine receptor CXCR2 on leukocytes (PubMed:23235402, PubMed:3422637). Proteolytic cleavage of surfactant protein A impairs bacterial phagocytosis by neutrophils while CXCR2 degradation blocks neutrophil activation and chemotaxis (PubMed:23235402, PubMed:3422637). Additionally, promotes vascular leakage by activating the plasma kallikerin/kinin system, resulting in hypotension (PubMed:15897280).</text>
</comment>
<comment type="catalytic activity">
    <reaction>
        <text>Broad endopeptidase action on proteins including elastin, but rather limited hydrolysis of small-molecule substrates. Assays are conveniently made with hemoglobin, casein or Z-Phe-Arg-NHMec as substrate.</text>
        <dbReference type="EC" id="3.4.22.48"/>
    </reaction>
</comment>
<comment type="activity regulation">
    <text evidence="6">Prematurely activated/folded staphopain A is inhibited by staphostatin A (ScpB), which is probably required to protect staphylococcal cytoplasmic proteins from degradation by ScpA. Also inactivated by heavy metal ions such as Hg(2+) or Ag(+), iodoacetamide, E-64 and human plasma.</text>
</comment>
<comment type="biophysicochemical properties">
    <kinetics>
        <KM evidence="6">0.5 mM for CBZ-Phe-Leu-Glu-pNA</KM>
    </kinetics>
    <phDependence>
        <text evidence="6">Optimum pH is 6.5 for elastin hydrolysis.</text>
    </phDependence>
</comment>
<comment type="subunit">
    <text evidence="8">In the cytoplasm, prematurely activated/folded ScpA forms a stable non-covalent complex with ScpB.</text>
</comment>
<comment type="subcellular location">
    <subcellularLocation>
        <location evidence="4">Secreted</location>
    </subcellularLocation>
</comment>
<comment type="induction">
    <text>Expression occurs in a growth phase-dependent manner with optimal expression at post-exponential phase. Up-regulated by Agr (accessory gene regulator) and repressed by SarA (staphylococcal accessory regulator) and sigmaB factor.</text>
</comment>
<comment type="PTM">
    <text>Cleavage leads to the activation of ScpA probably by an auto-catalytic manner.</text>
</comment>
<comment type="miscellaneous">
    <text>The catalytic maturation of ScpA appears to reside outside the cascade of activation started by the metalloprotease aureolysin (aur).</text>
</comment>
<comment type="similarity">
    <text evidence="9">Belongs to the peptidase C47 family.</text>
</comment>
<feature type="signal peptide" evidence="1">
    <location>
        <begin position="1"/>
        <end position="25"/>
    </location>
</feature>
<feature type="propeptide" id="PRO_0000026545" evidence="7">
    <location>
        <begin position="26"/>
        <end position="214"/>
    </location>
</feature>
<feature type="chain" id="PRO_0000026546" description="Staphopain A">
    <location>
        <begin position="215"/>
        <end position="388"/>
    </location>
</feature>
<feature type="active site" evidence="2">
    <location>
        <position position="238"/>
    </location>
</feature>
<feature type="active site" evidence="2">
    <location>
        <position position="334"/>
    </location>
</feature>
<feature type="active site" evidence="2">
    <location>
        <position position="355"/>
    </location>
</feature>
<feature type="site" description="Cleavage">
    <location>
        <begin position="214"/>
        <end position="215"/>
    </location>
</feature>
<feature type="sequence conflict" description="In Ref. 2; AA sequence." evidence="9" ref="2">
    <original>E</original>
    <variation>G</variation>
    <location>
        <position position="288"/>
    </location>
</feature>
<feature type="strand" evidence="10">
    <location>
        <begin position="217"/>
        <end position="222"/>
    </location>
</feature>
<feature type="strand" evidence="10">
    <location>
        <begin position="234"/>
        <end position="236"/>
    </location>
</feature>
<feature type="helix" evidence="10">
    <location>
        <begin position="238"/>
        <end position="251"/>
    </location>
</feature>
<feature type="helix" evidence="10">
    <location>
        <begin position="258"/>
        <end position="265"/>
    </location>
</feature>
<feature type="helix" evidence="10">
    <location>
        <begin position="271"/>
        <end position="276"/>
    </location>
</feature>
<feature type="helix" evidence="10">
    <location>
        <begin position="281"/>
        <end position="290"/>
    </location>
</feature>
<feature type="strand" evidence="10">
    <location>
        <begin position="296"/>
        <end position="300"/>
    </location>
</feature>
<feature type="helix" evidence="10">
    <location>
        <begin position="304"/>
        <end position="312"/>
    </location>
</feature>
<feature type="strand" evidence="10">
    <location>
        <begin position="317"/>
        <end position="325"/>
    </location>
</feature>
<feature type="strand" evidence="10">
    <location>
        <begin position="333"/>
        <end position="344"/>
    </location>
</feature>
<feature type="strand" evidence="10">
    <location>
        <begin position="349"/>
        <end position="354"/>
    </location>
</feature>
<feature type="strand" evidence="10">
    <location>
        <begin position="362"/>
        <end position="365"/>
    </location>
</feature>
<feature type="strand" evidence="10">
    <location>
        <begin position="370"/>
        <end position="372"/>
    </location>
</feature>
<feature type="strand" evidence="10">
    <location>
        <begin position="378"/>
        <end position="386"/>
    </location>
</feature>
<gene>
    <name type="primary">sspP</name>
    <name type="synonym">scpA</name>
</gene>
<reference key="1">
    <citation type="journal article" date="2004" name="Biol. Chem.">
        <title>Genetic characterization of staphopain genes in Staphylococcus aureus.</title>
        <authorList>
            <person name="Golonka E."/>
            <person name="Filipek R."/>
            <person name="Sabat A."/>
            <person name="Sinczak A."/>
            <person name="Potempa J."/>
        </authorList>
    </citation>
    <scope>NUCLEOTIDE SEQUENCE [GENOMIC DNA]</scope>
    <source>
        <strain>ATCC 27733 / V8</strain>
    </source>
</reference>
<reference key="2">
    <citation type="submission" date="1998-04" db="UniProtKB">
        <authorList>
            <person name="Kiess M."/>
            <person name="Hofmann B."/>
            <person name="Weissflog S."/>
            <person name="Schomburg D."/>
        </authorList>
    </citation>
    <scope>PROTEIN SEQUENCE OF 215-388</scope>
    <source>
        <strain>ATCC 27733 / V8</strain>
    </source>
</reference>
<reference key="3">
    <citation type="journal article" date="1988" name="J. Biol. Chem.">
        <title>Degradation of elastin by a cysteine proteinase from Staphylococcus aureus.</title>
        <authorList>
            <person name="Potempa J."/>
            <person name="Dubin A."/>
            <person name="Korzus G."/>
            <person name="Travis J."/>
        </authorList>
    </citation>
    <scope>FUNCTION</scope>
    <scope>ACTIVITY REGULATION</scope>
    <scope>BIOPHYSICOCHEMICAL PROPERTIES</scope>
    <source>
        <strain>ATCC 27733 / V8</strain>
    </source>
</reference>
<reference key="4">
    <citation type="journal article" date="2003" name="Biochemistry">
        <title>A novel class of cysteine protease inhibitors: solution structure of staphostatin A from Staphylococcus aureus.</title>
        <authorList>
            <person name="Dubin G."/>
            <person name="Krajewski M."/>
            <person name="Popowicz G."/>
            <person name="Stec-Niemczyk J."/>
            <person name="Bochtler M."/>
            <person name="Potempa J."/>
            <person name="Dubin A."/>
            <person name="Holak T.A."/>
        </authorList>
    </citation>
    <scope>INTERACTION WITH STAPHOSTATIN A</scope>
    <source>
        <strain>ATCC 27733 / V8</strain>
    </source>
</reference>
<reference key="5">
    <citation type="journal article" date="2003" name="Mol. Microbiol.">
        <title>Staphostatins: an expanding new group of proteinase inhibitors with a unique specificity for the regulation of staphopains, Staphylococcus spp. cysteine proteinases.</title>
        <authorList>
            <person name="Rzychon M."/>
            <person name="Sabat A."/>
            <person name="Kosowska K."/>
            <person name="Potempa J."/>
            <person name="Dubin A."/>
        </authorList>
    </citation>
    <scope>INTERACTION WITH STAPHOSTATIN A</scope>
    <source>
        <strain>ATCC 27733 / V8</strain>
    </source>
</reference>
<reference key="6">
    <citation type="journal article" date="2005" name="J. Exp. Med.">
        <title>Induction of vascular leakage through release of bradykinin and a novel kinin by cysteine proteinases from Staphylococcus aureus.</title>
        <authorList>
            <person name="Imamura T."/>
            <person name="Tanase S."/>
            <person name="Szmyd G."/>
            <person name="Kozik A."/>
            <person name="Travis J."/>
            <person name="Potempa J."/>
        </authorList>
    </citation>
    <scope>FUNCTION</scope>
    <source>
        <strain>V8-BC10</strain>
    </source>
</reference>
<reference key="7">
    <citation type="journal article" date="2012" name="EMBO J.">
        <title>Staphylococcus aureus Staphopain A inhibits CXCR2-dependent neutrophil activation and chemotaxis.</title>
        <authorList>
            <person name="Laarman A.J."/>
            <person name="Mijnheer G."/>
            <person name="Mootz J.M."/>
            <person name="van Rooijen W.J."/>
            <person name="Ruyken M."/>
            <person name="Malone C.L."/>
            <person name="Heezius E.C."/>
            <person name="Ward R."/>
            <person name="Milligan G."/>
            <person name="van Strijp J.A."/>
            <person name="de Haas C.J."/>
            <person name="Horswill A.R."/>
            <person name="van Kessel K.P."/>
            <person name="Rooijakkers S.H."/>
        </authorList>
    </citation>
    <scope>FUNCTION</scope>
    <scope>SUBCELLULAR LOCATION</scope>
</reference>
<reference key="8">
    <citation type="journal article" date="2013" name="J. Innate Immun.">
        <title>Staphylococcus aureus proteases degrade lung surfactant protein A potentially impairing innate immunity of the lung.</title>
        <authorList>
            <person name="Kantyka T."/>
            <person name="Pyrc K."/>
            <person name="Gruca M."/>
            <person name="Smagur J."/>
            <person name="Plaza K."/>
            <person name="Guzik K."/>
            <person name="Zeglen S."/>
            <person name="Ochman M."/>
            <person name="Potempa J."/>
        </authorList>
    </citation>
    <scope>FUNCTION</scope>
    <source>
        <strain>LAC</strain>
    </source>
</reference>
<reference key="9">
    <citation type="journal article" date="1993" name="Acta Crystallogr. A">
        <title>Crystal structure of a thiol proteinase from Staphylococcus aureus V-8 in the E-64 inhibitor complex.</title>
        <authorList>
            <person name="Hofmann B."/>
            <person name="Schomburg D."/>
            <person name="Hecht H.-J."/>
        </authorList>
    </citation>
    <scope>X-RAY CRYSTALLOGRAPHY (1.75 ANGSTROMS) OF 215-388 IN COMPLEX WITH E-64</scope>
    <source>
        <strain>ATCC 27733 / V8</strain>
    </source>
</reference>
<proteinExistence type="evidence at protein level"/>
<sequence length="388" mass="44120">MKRNFPKLIALSLIFSLSITPIANAESNSNIKAKDKRHVQVNVEDKSVPTDVRNLAQKDYLSYVTSLDKIYNKEKASYTLGEPFKIYKFNKKSDGNYYFPVLNTEGNIDYIVTISPKVTKDSSSSSKYTINVSSFLSKALNEYKDQQITILTNSKGYYVVTQNHKAKLVLKTPRLEDKKAKKTESIPTGNNVTQLKQKASVTMPTSQFKSNNYTYNEQYVNKLENFKIRETQGNNGWCAGYTMSALLNATYNTNKYHAEAVMRFLHPNLQGQQFQFTGLTPREMIYFEQTQGRSPQLLNRMTTYNEVDNLTKNNKGIAILGSRVESRNGMHAGHAMAVVGNAKLNNGQEVIIIWNPWDNGFMTQDAKNNVIPVSNGDHYQWYSSIYGY</sequence>
<name>SSPP_STAAU</name>
<organism>
    <name type="scientific">Staphylococcus aureus</name>
    <dbReference type="NCBI Taxonomy" id="1280"/>
    <lineage>
        <taxon>Bacteria</taxon>
        <taxon>Bacillati</taxon>
        <taxon>Bacillota</taxon>
        <taxon>Bacilli</taxon>
        <taxon>Bacillales</taxon>
        <taxon>Staphylococcaceae</taxon>
        <taxon>Staphylococcus</taxon>
    </lineage>
</organism>
<protein>
    <recommendedName>
        <fullName>Staphopain A</fullName>
        <ecNumber evidence="6">3.4.22.48</ecNumber>
    </recommendedName>
    <alternativeName>
        <fullName>Staphylococcal cysteine proteinase A</fullName>
    </alternativeName>
    <alternativeName>
        <fullName>Staphylopain A</fullName>
    </alternativeName>
</protein>
<dbReference type="EC" id="3.4.22.48" evidence="6"/>
<dbReference type="EMBL" id="AJ538362">
    <property type="protein sequence ID" value="CAD61962.1"/>
    <property type="molecule type" value="Genomic_DNA"/>
</dbReference>
<dbReference type="PDB" id="1CV8">
    <property type="method" value="X-ray"/>
    <property type="resolution" value="1.75 A"/>
    <property type="chains" value="A=215-388"/>
</dbReference>
<dbReference type="PDBsum" id="1CV8"/>
<dbReference type="SMR" id="P81297"/>
<dbReference type="MEROPS" id="C47.001"/>
<dbReference type="BRENDA" id="3.4.22.48">
    <property type="organism ID" value="3352"/>
</dbReference>
<dbReference type="EvolutionaryTrace" id="P81297"/>
<dbReference type="PHI-base" id="PHI:11914"/>
<dbReference type="GO" id="GO:0005576">
    <property type="term" value="C:extracellular region"/>
    <property type="evidence" value="ECO:0007669"/>
    <property type="project" value="UniProtKB-SubCell"/>
</dbReference>
<dbReference type="GO" id="GO:0008234">
    <property type="term" value="F:cysteine-type peptidase activity"/>
    <property type="evidence" value="ECO:0007669"/>
    <property type="project" value="UniProtKB-KW"/>
</dbReference>
<dbReference type="GO" id="GO:0006508">
    <property type="term" value="P:proteolysis"/>
    <property type="evidence" value="ECO:0007669"/>
    <property type="project" value="UniProtKB-KW"/>
</dbReference>
<dbReference type="Gene3D" id="3.90.70.10">
    <property type="entry name" value="Cysteine proteinases"/>
    <property type="match status" value="1"/>
</dbReference>
<dbReference type="Gene3D" id="3.10.500.10">
    <property type="entry name" value="Staphopain proregion domain"/>
    <property type="match status" value="1"/>
</dbReference>
<dbReference type="InterPro" id="IPR046350">
    <property type="entry name" value="Cystatin_sf"/>
</dbReference>
<dbReference type="InterPro" id="IPR038765">
    <property type="entry name" value="Papain-like_cys_pep_sf"/>
</dbReference>
<dbReference type="InterPro" id="IPR025660">
    <property type="entry name" value="Pept_his_AS"/>
</dbReference>
<dbReference type="InterPro" id="IPR008750">
    <property type="entry name" value="Peptidase_C47"/>
</dbReference>
<dbReference type="InterPro" id="IPR028076">
    <property type="entry name" value="Staphopain_pro"/>
</dbReference>
<dbReference type="InterPro" id="IPR037155">
    <property type="entry name" value="Staphopain_pro_sf"/>
</dbReference>
<dbReference type="Pfam" id="PF05543">
    <property type="entry name" value="Peptidase_C47"/>
    <property type="match status" value="1"/>
</dbReference>
<dbReference type="Pfam" id="PF14731">
    <property type="entry name" value="Staphopain_pro"/>
    <property type="match status" value="1"/>
</dbReference>
<dbReference type="SUPFAM" id="SSF54403">
    <property type="entry name" value="Cystatin/monellin"/>
    <property type="match status" value="1"/>
</dbReference>
<dbReference type="SUPFAM" id="SSF54001">
    <property type="entry name" value="Cysteine proteinases"/>
    <property type="match status" value="1"/>
</dbReference>
<dbReference type="PROSITE" id="PS00639">
    <property type="entry name" value="THIOL_PROTEASE_HIS"/>
    <property type="match status" value="1"/>
</dbReference>
<evidence type="ECO:0000255" key="1"/>
<evidence type="ECO:0000255" key="2">
    <source>
        <dbReference type="PROSITE-ProRule" id="PRU10089"/>
    </source>
</evidence>
<evidence type="ECO:0000269" key="3">
    <source>
    </source>
</evidence>
<evidence type="ECO:0000269" key="4">
    <source>
    </source>
</evidence>
<evidence type="ECO:0000269" key="5">
    <source>
    </source>
</evidence>
<evidence type="ECO:0000269" key="6">
    <source>
    </source>
</evidence>
<evidence type="ECO:0000269" key="7">
    <source ref="2"/>
</evidence>
<evidence type="ECO:0000269" key="8">
    <source ref="9"/>
</evidence>
<evidence type="ECO:0000305" key="9"/>
<evidence type="ECO:0007829" key="10">
    <source>
        <dbReference type="PDB" id="1CV8"/>
    </source>
</evidence>